<protein>
    <recommendedName>
        <fullName evidence="3">Obg-like ATPase 1</fullName>
    </recommendedName>
</protein>
<accession>Q5R821</accession>
<evidence type="ECO:0000250" key="1"/>
<evidence type="ECO:0000250" key="2">
    <source>
        <dbReference type="UniProtKB" id="Q9NTK5"/>
    </source>
</evidence>
<evidence type="ECO:0000255" key="3">
    <source>
        <dbReference type="HAMAP-Rule" id="MF_03167"/>
    </source>
</evidence>
<evidence type="ECO:0000255" key="4">
    <source>
        <dbReference type="PROSITE-ProRule" id="PRU01228"/>
    </source>
</evidence>
<sequence>MPPKKGGDGIKPPPIIGRFGTSLKIGIVGLPNVGKSTFFNVLTNSQASAENFPFCTIDPNESRVPVPDERFDSLCQYHKPASKIPAFLNVVDIAGLVKGAHNGQGLGNAFLSHISACDGIFHLTRAFEDDDITHVEGSVDPIRDIEIIHEELQLKDEEMIGPIIDKLEKVAVRGGDKKLKPEYDIMCKVKSWVIDQKKPVRFYHDWNDKEIEVLNKHLFLTSKPMVYLVNLSEKDYIRKKNKWLIKIKEWVDKYDPGALVIPFSGALELKLQELSAEERQKYLEANMTQSALPKIIKAGFAALQLEYFFTAGPEEVRAWTIRKGTKAPQAAGKIHTDFEKGFIMAEVMKYEDFKEEGSENAVKAAGKYRQQGRNYIVEDGDIIFFKFNTPQQPKKK</sequence>
<proteinExistence type="evidence at transcript level"/>
<name>OLA1_PONAB</name>
<keyword id="KW-0007">Acetylation</keyword>
<keyword id="KW-0067">ATP-binding</keyword>
<keyword id="KW-0963">Cytoplasm</keyword>
<keyword id="KW-0378">Hydrolase</keyword>
<keyword id="KW-0460">Magnesium</keyword>
<keyword id="KW-0479">Metal-binding</keyword>
<keyword id="KW-0547">Nucleotide-binding</keyword>
<keyword id="KW-0539">Nucleus</keyword>
<keyword id="KW-1185">Reference proteome</keyword>
<organism>
    <name type="scientific">Pongo abelii</name>
    <name type="common">Sumatran orangutan</name>
    <name type="synonym">Pongo pygmaeus abelii</name>
    <dbReference type="NCBI Taxonomy" id="9601"/>
    <lineage>
        <taxon>Eukaryota</taxon>
        <taxon>Metazoa</taxon>
        <taxon>Chordata</taxon>
        <taxon>Craniata</taxon>
        <taxon>Vertebrata</taxon>
        <taxon>Euteleostomi</taxon>
        <taxon>Mammalia</taxon>
        <taxon>Eutheria</taxon>
        <taxon>Euarchontoglires</taxon>
        <taxon>Primates</taxon>
        <taxon>Haplorrhini</taxon>
        <taxon>Catarrhini</taxon>
        <taxon>Hominidae</taxon>
        <taxon>Pongo</taxon>
    </lineage>
</organism>
<dbReference type="EMBL" id="CR859934">
    <property type="protein sequence ID" value="CAH92089.1"/>
    <property type="molecule type" value="mRNA"/>
</dbReference>
<dbReference type="RefSeq" id="NP_001127505.1">
    <property type="nucleotide sequence ID" value="NM_001134033.1"/>
</dbReference>
<dbReference type="SMR" id="Q5R821"/>
<dbReference type="STRING" id="9601.ENSPPYP00000014451"/>
<dbReference type="GeneID" id="100174581"/>
<dbReference type="KEGG" id="pon:100174581"/>
<dbReference type="CTD" id="29789"/>
<dbReference type="eggNOG" id="KOG1491">
    <property type="taxonomic scope" value="Eukaryota"/>
</dbReference>
<dbReference type="InParanoid" id="Q5R821"/>
<dbReference type="OrthoDB" id="424823at2759"/>
<dbReference type="Proteomes" id="UP000001595">
    <property type="component" value="Unplaced"/>
</dbReference>
<dbReference type="GO" id="GO:0005737">
    <property type="term" value="C:cytoplasm"/>
    <property type="evidence" value="ECO:0007669"/>
    <property type="project" value="UniProtKB-SubCell"/>
</dbReference>
<dbReference type="GO" id="GO:0005730">
    <property type="term" value="C:nucleolus"/>
    <property type="evidence" value="ECO:0007669"/>
    <property type="project" value="UniProtKB-SubCell"/>
</dbReference>
<dbReference type="GO" id="GO:0005524">
    <property type="term" value="F:ATP binding"/>
    <property type="evidence" value="ECO:0007669"/>
    <property type="project" value="UniProtKB-UniRule"/>
</dbReference>
<dbReference type="GO" id="GO:0016887">
    <property type="term" value="F:ATP hydrolysis activity"/>
    <property type="evidence" value="ECO:0007669"/>
    <property type="project" value="UniProtKB-UniRule"/>
</dbReference>
<dbReference type="GO" id="GO:0005525">
    <property type="term" value="F:GTP binding"/>
    <property type="evidence" value="ECO:0007669"/>
    <property type="project" value="InterPro"/>
</dbReference>
<dbReference type="GO" id="GO:0046872">
    <property type="term" value="F:metal ion binding"/>
    <property type="evidence" value="ECO:0007669"/>
    <property type="project" value="UniProtKB-KW"/>
</dbReference>
<dbReference type="GO" id="GO:0043023">
    <property type="term" value="F:ribosomal large subunit binding"/>
    <property type="evidence" value="ECO:0007669"/>
    <property type="project" value="UniProtKB-UniRule"/>
</dbReference>
<dbReference type="CDD" id="cd04867">
    <property type="entry name" value="TGS_YchF_OLA1"/>
    <property type="match status" value="1"/>
</dbReference>
<dbReference type="CDD" id="cd01900">
    <property type="entry name" value="YchF"/>
    <property type="match status" value="1"/>
</dbReference>
<dbReference type="FunFam" id="1.10.150.300:FF:000003">
    <property type="entry name" value="Obg-like ATPase 1"/>
    <property type="match status" value="1"/>
</dbReference>
<dbReference type="FunFam" id="3.10.20.30:FF:000029">
    <property type="entry name" value="Obg-like ATPase 1"/>
    <property type="match status" value="1"/>
</dbReference>
<dbReference type="Gene3D" id="3.10.20.30">
    <property type="match status" value="1"/>
</dbReference>
<dbReference type="Gene3D" id="3.40.50.300">
    <property type="entry name" value="P-loop containing nucleotide triphosphate hydrolases"/>
    <property type="match status" value="1"/>
</dbReference>
<dbReference type="Gene3D" id="1.10.150.300">
    <property type="entry name" value="TGS-like domain"/>
    <property type="match status" value="1"/>
</dbReference>
<dbReference type="HAMAP" id="MF_00944">
    <property type="entry name" value="YchF_OLA1_ATPase"/>
    <property type="match status" value="1"/>
</dbReference>
<dbReference type="InterPro" id="IPR004396">
    <property type="entry name" value="ATPase_YchF/OLA1"/>
</dbReference>
<dbReference type="InterPro" id="IPR012675">
    <property type="entry name" value="Beta-grasp_dom_sf"/>
</dbReference>
<dbReference type="InterPro" id="IPR031167">
    <property type="entry name" value="G_OBG"/>
</dbReference>
<dbReference type="InterPro" id="IPR006073">
    <property type="entry name" value="GTP-bd"/>
</dbReference>
<dbReference type="InterPro" id="IPR027417">
    <property type="entry name" value="P-loop_NTPase"/>
</dbReference>
<dbReference type="InterPro" id="IPR004095">
    <property type="entry name" value="TGS"/>
</dbReference>
<dbReference type="InterPro" id="IPR012676">
    <property type="entry name" value="TGS-like"/>
</dbReference>
<dbReference type="InterPro" id="IPR023192">
    <property type="entry name" value="TGS-like_dom_sf"/>
</dbReference>
<dbReference type="InterPro" id="IPR013029">
    <property type="entry name" value="YchF_C"/>
</dbReference>
<dbReference type="InterPro" id="IPR041706">
    <property type="entry name" value="YchF_N"/>
</dbReference>
<dbReference type="NCBIfam" id="TIGR00092">
    <property type="entry name" value="redox-regulated ATPase YchF"/>
    <property type="match status" value="1"/>
</dbReference>
<dbReference type="PANTHER" id="PTHR23305">
    <property type="entry name" value="OBG GTPASE FAMILY"/>
    <property type="match status" value="1"/>
</dbReference>
<dbReference type="PANTHER" id="PTHR23305:SF11">
    <property type="entry name" value="OBG-LIKE ATPASE 1"/>
    <property type="match status" value="1"/>
</dbReference>
<dbReference type="Pfam" id="PF01926">
    <property type="entry name" value="MMR_HSR1"/>
    <property type="match status" value="1"/>
</dbReference>
<dbReference type="Pfam" id="PF06071">
    <property type="entry name" value="YchF-GTPase_C"/>
    <property type="match status" value="1"/>
</dbReference>
<dbReference type="PIRSF" id="PIRSF006641">
    <property type="entry name" value="CHP00092"/>
    <property type="match status" value="1"/>
</dbReference>
<dbReference type="PRINTS" id="PR00326">
    <property type="entry name" value="GTP1OBG"/>
</dbReference>
<dbReference type="SUPFAM" id="SSF52540">
    <property type="entry name" value="P-loop containing nucleoside triphosphate hydrolases"/>
    <property type="match status" value="1"/>
</dbReference>
<dbReference type="SUPFAM" id="SSF81271">
    <property type="entry name" value="TGS-like"/>
    <property type="match status" value="1"/>
</dbReference>
<dbReference type="PROSITE" id="PS51710">
    <property type="entry name" value="G_OBG"/>
    <property type="match status" value="1"/>
</dbReference>
<dbReference type="PROSITE" id="PS51880">
    <property type="entry name" value="TGS"/>
    <property type="match status" value="1"/>
</dbReference>
<gene>
    <name evidence="3" type="primary">OLA1</name>
</gene>
<comment type="function">
    <text evidence="3">Hydrolyzes ATP, and can also hydrolyze GTP with lower efficiency. Has lower affinity for GTP.</text>
</comment>
<comment type="cofactor">
    <cofactor evidence="1">
        <name>Mg(2+)</name>
        <dbReference type="ChEBI" id="CHEBI:18420"/>
    </cofactor>
</comment>
<comment type="subunit">
    <text evidence="3">Monomer.</text>
</comment>
<comment type="subcellular location">
    <subcellularLocation>
        <location evidence="3">Cytoplasm</location>
    </subcellularLocation>
    <subcellularLocation>
        <location evidence="3">Nucleus</location>
    </subcellularLocation>
    <subcellularLocation>
        <location evidence="3">Nucleus</location>
        <location evidence="3">Nucleolus</location>
    </subcellularLocation>
    <text evidence="3">Predominantly cytoplasmic, shuttles between the nucleus and the cytoplasm.</text>
</comment>
<comment type="similarity">
    <text evidence="3">Belongs to the TRAFAC class OBG-HflX-like GTPase superfamily. OBG GTPase family. YchF/OLA1 subfamily.</text>
</comment>
<reference key="1">
    <citation type="submission" date="2004-11" db="EMBL/GenBank/DDBJ databases">
        <authorList>
            <consortium name="The German cDNA consortium"/>
        </authorList>
    </citation>
    <scope>NUCLEOTIDE SEQUENCE [LARGE SCALE MRNA]</scope>
    <source>
        <tissue>Kidney</tissue>
    </source>
</reference>
<feature type="chain" id="PRO_0000354697" description="Obg-like ATPase 1">
    <location>
        <begin position="1"/>
        <end position="396"/>
    </location>
</feature>
<feature type="domain" description="OBG-type G">
    <location>
        <begin position="23"/>
        <end position="283"/>
    </location>
</feature>
<feature type="domain" description="TGS" evidence="4">
    <location>
        <begin position="304"/>
        <end position="387"/>
    </location>
</feature>
<feature type="short sequence motif" description="Nuclear export signal" evidence="3">
    <location>
        <begin position="267"/>
        <end position="274"/>
    </location>
</feature>
<feature type="binding site" evidence="3">
    <location>
        <begin position="32"/>
        <end position="37"/>
    </location>
    <ligand>
        <name>ATP</name>
        <dbReference type="ChEBI" id="CHEBI:30616"/>
    </ligand>
</feature>
<feature type="binding site" evidence="1">
    <location>
        <position position="36"/>
    </location>
    <ligand>
        <name>Mg(2+)</name>
        <dbReference type="ChEBI" id="CHEBI:18420"/>
    </ligand>
</feature>
<feature type="binding site" evidence="1">
    <location>
        <position position="56"/>
    </location>
    <ligand>
        <name>Mg(2+)</name>
        <dbReference type="ChEBI" id="CHEBI:18420"/>
    </ligand>
</feature>
<feature type="binding site" evidence="3">
    <location>
        <position position="231"/>
    </location>
    <ligand>
        <name>ATP</name>
        <dbReference type="ChEBI" id="CHEBI:30616"/>
    </ligand>
</feature>
<feature type="modified residue" description="N6-acetyllysine" evidence="2">
    <location>
        <position position="294"/>
    </location>
</feature>